<dbReference type="EMBL" id="AE014299">
    <property type="protein sequence ID" value="AAN55913.1"/>
    <property type="molecule type" value="Genomic_DNA"/>
</dbReference>
<dbReference type="RefSeq" id="NP_718469.1">
    <property type="nucleotide sequence ID" value="NC_004347.2"/>
</dbReference>
<dbReference type="RefSeq" id="WP_011072806.1">
    <property type="nucleotide sequence ID" value="NC_004347.2"/>
</dbReference>
<dbReference type="SMR" id="Q8ED69"/>
<dbReference type="STRING" id="211586.SO_2897"/>
<dbReference type="PaxDb" id="211586-SO_2897"/>
<dbReference type="KEGG" id="son:SO_2897"/>
<dbReference type="PATRIC" id="fig|211586.12.peg.2795"/>
<dbReference type="eggNOG" id="COG3115">
    <property type="taxonomic scope" value="Bacteria"/>
</dbReference>
<dbReference type="HOGENOM" id="CLU_030174_1_0_6"/>
<dbReference type="OrthoDB" id="7054914at2"/>
<dbReference type="BioCyc" id="SONE211586:G1GMP-2673-MONOMER"/>
<dbReference type="Proteomes" id="UP000008186">
    <property type="component" value="Chromosome"/>
</dbReference>
<dbReference type="GO" id="GO:0032153">
    <property type="term" value="C:cell division site"/>
    <property type="evidence" value="ECO:0000318"/>
    <property type="project" value="GO_Central"/>
</dbReference>
<dbReference type="GO" id="GO:0005886">
    <property type="term" value="C:plasma membrane"/>
    <property type="evidence" value="ECO:0000318"/>
    <property type="project" value="GO_Central"/>
</dbReference>
<dbReference type="GO" id="GO:0000917">
    <property type="term" value="P:division septum assembly"/>
    <property type="evidence" value="ECO:0000318"/>
    <property type="project" value="GO_Central"/>
</dbReference>
<dbReference type="GO" id="GO:0043093">
    <property type="term" value="P:FtsZ-dependent cytokinesis"/>
    <property type="evidence" value="ECO:0007669"/>
    <property type="project" value="UniProtKB-UniRule"/>
</dbReference>
<dbReference type="FunFam" id="3.30.1400.10:FF:000001">
    <property type="entry name" value="Cell division protein ZipA"/>
    <property type="match status" value="1"/>
</dbReference>
<dbReference type="Gene3D" id="3.30.1400.10">
    <property type="entry name" value="ZipA, C-terminal FtsZ-binding domain"/>
    <property type="match status" value="1"/>
</dbReference>
<dbReference type="HAMAP" id="MF_00509">
    <property type="entry name" value="ZipA"/>
    <property type="match status" value="1"/>
</dbReference>
<dbReference type="InterPro" id="IPR011919">
    <property type="entry name" value="Cell_div_ZipA"/>
</dbReference>
<dbReference type="InterPro" id="IPR007449">
    <property type="entry name" value="ZipA_FtsZ-bd_C"/>
</dbReference>
<dbReference type="InterPro" id="IPR036765">
    <property type="entry name" value="ZipA_FtsZ-bd_C_sf"/>
</dbReference>
<dbReference type="NCBIfam" id="TIGR02205">
    <property type="entry name" value="septum_zipA"/>
    <property type="match status" value="1"/>
</dbReference>
<dbReference type="PANTHER" id="PTHR38685">
    <property type="entry name" value="CELL DIVISION PROTEIN ZIPA"/>
    <property type="match status" value="1"/>
</dbReference>
<dbReference type="PANTHER" id="PTHR38685:SF1">
    <property type="entry name" value="CELL DIVISION PROTEIN ZIPA"/>
    <property type="match status" value="1"/>
</dbReference>
<dbReference type="Pfam" id="PF04354">
    <property type="entry name" value="ZipA_C"/>
    <property type="match status" value="1"/>
</dbReference>
<dbReference type="SMART" id="SM00771">
    <property type="entry name" value="ZipA_C"/>
    <property type="match status" value="1"/>
</dbReference>
<dbReference type="SUPFAM" id="SSF64383">
    <property type="entry name" value="Cell-division protein ZipA, C-terminal domain"/>
    <property type="match status" value="1"/>
</dbReference>
<reference key="1">
    <citation type="journal article" date="2002" name="Nat. Biotechnol.">
        <title>Genome sequence of the dissimilatory metal ion-reducing bacterium Shewanella oneidensis.</title>
        <authorList>
            <person name="Heidelberg J.F."/>
            <person name="Paulsen I.T."/>
            <person name="Nelson K.E."/>
            <person name="Gaidos E.J."/>
            <person name="Nelson W.C."/>
            <person name="Read T.D."/>
            <person name="Eisen J.A."/>
            <person name="Seshadri R."/>
            <person name="Ward N.L."/>
            <person name="Methe B.A."/>
            <person name="Clayton R.A."/>
            <person name="Meyer T."/>
            <person name="Tsapin A."/>
            <person name="Scott J."/>
            <person name="Beanan M.J."/>
            <person name="Brinkac L.M."/>
            <person name="Daugherty S.C."/>
            <person name="DeBoy R.T."/>
            <person name="Dodson R.J."/>
            <person name="Durkin A.S."/>
            <person name="Haft D.H."/>
            <person name="Kolonay J.F."/>
            <person name="Madupu R."/>
            <person name="Peterson J.D."/>
            <person name="Umayam L.A."/>
            <person name="White O."/>
            <person name="Wolf A.M."/>
            <person name="Vamathevan J.J."/>
            <person name="Weidman J.F."/>
            <person name="Impraim M."/>
            <person name="Lee K."/>
            <person name="Berry K.J."/>
            <person name="Lee C."/>
            <person name="Mueller J."/>
            <person name="Khouri H.M."/>
            <person name="Gill J."/>
            <person name="Utterback T.R."/>
            <person name="McDonald L.A."/>
            <person name="Feldblyum T.V."/>
            <person name="Smith H.O."/>
            <person name="Venter J.C."/>
            <person name="Nealson K.H."/>
            <person name="Fraser C.M."/>
        </authorList>
    </citation>
    <scope>NUCLEOTIDE SEQUENCE [LARGE SCALE GENOMIC DNA]</scope>
    <source>
        <strain>ATCC 700550 / JCM 31522 / CIP 106686 / LMG 19005 / NCIMB 14063 / MR-1</strain>
    </source>
</reference>
<name>ZIPA_SHEON</name>
<organism>
    <name type="scientific">Shewanella oneidensis (strain ATCC 700550 / JCM 31522 / CIP 106686 / LMG 19005 / NCIMB 14063 / MR-1)</name>
    <dbReference type="NCBI Taxonomy" id="211586"/>
    <lineage>
        <taxon>Bacteria</taxon>
        <taxon>Pseudomonadati</taxon>
        <taxon>Pseudomonadota</taxon>
        <taxon>Gammaproteobacteria</taxon>
        <taxon>Alteromonadales</taxon>
        <taxon>Shewanellaceae</taxon>
        <taxon>Shewanella</taxon>
    </lineage>
</organism>
<gene>
    <name evidence="1" type="primary">zipA</name>
    <name type="ordered locus">SO_2897</name>
</gene>
<accession>Q8ED69</accession>
<proteinExistence type="inferred from homology"/>
<protein>
    <recommendedName>
        <fullName evidence="1">Cell division protein ZipA</fullName>
    </recommendedName>
</protein>
<comment type="function">
    <text evidence="1">Essential cell division protein that stabilizes the FtsZ protofilaments by cross-linking them and that serves as a cytoplasmic membrane anchor for the Z ring. Also required for the recruitment to the septal ring of downstream cell division proteins.</text>
</comment>
<comment type="subunit">
    <text evidence="1">Interacts with FtsZ via their C-terminal domains.</text>
</comment>
<comment type="subcellular location">
    <subcellularLocation>
        <location evidence="1">Cell inner membrane</location>
        <topology evidence="1">Single-pass type I membrane protein</topology>
    </subcellularLocation>
    <text evidence="1">Localizes to the Z ring in an FtsZ-dependent manner.</text>
</comment>
<comment type="similarity">
    <text evidence="1">Belongs to the ZipA family.</text>
</comment>
<feature type="chain" id="PRO_0000214536" description="Cell division protein ZipA">
    <location>
        <begin position="1"/>
        <end position="344"/>
    </location>
</feature>
<feature type="topological domain" description="Periplasmic" evidence="1">
    <location>
        <begin position="1"/>
        <end position="6"/>
    </location>
</feature>
<feature type="transmembrane region" description="Helical" evidence="1">
    <location>
        <begin position="7"/>
        <end position="27"/>
    </location>
</feature>
<feature type="topological domain" description="Cytoplasmic" evidence="1">
    <location>
        <begin position="28"/>
        <end position="344"/>
    </location>
</feature>
<feature type="region of interest" description="Disordered" evidence="2">
    <location>
        <begin position="75"/>
        <end position="94"/>
    </location>
</feature>
<feature type="region of interest" description="Disordered" evidence="2">
    <location>
        <begin position="108"/>
        <end position="139"/>
    </location>
</feature>
<keyword id="KW-0131">Cell cycle</keyword>
<keyword id="KW-0132">Cell division</keyword>
<keyword id="KW-0997">Cell inner membrane</keyword>
<keyword id="KW-1003">Cell membrane</keyword>
<keyword id="KW-0472">Membrane</keyword>
<keyword id="KW-1185">Reference proteome</keyword>
<keyword id="KW-0812">Transmembrane</keyword>
<keyword id="KW-1133">Transmembrane helix</keyword>
<evidence type="ECO:0000255" key="1">
    <source>
        <dbReference type="HAMAP-Rule" id="MF_00509"/>
    </source>
</evidence>
<evidence type="ECO:0000256" key="2">
    <source>
        <dbReference type="SAM" id="MobiDB-lite"/>
    </source>
</evidence>
<sequence>MEDLQLVLFVLGAIAIVAVLVHGFWSIRRQQPKSLKDSPMGNFYKKQAERGEAAPAPKRVDAEGFDSDGIGAVRVRKASESQTPEAPAVNPYLKQEAKVEPQIEPKPQFKQEPSMAQPDFSLQSPSVDEPHRGTKASRQEPVLKSNTAHLNQEHAGQSHAAMVAQKVAEEQRAQVQKPTQTALFDDEVYQEQQPQAVEEAPETEESLGEPRDVLVLHVVAKEGQQLNGAELLPCFLTLNFKYGDMNIFHRHVDNAGNGKVLFSIANMVKPGVFDPDNMEQFSTLGVVFFMTLPCYGDALMNFSIMLNSARQLADDIDAVVLDGQRQPWGEFTKQDYLHRIRANA</sequence>